<accession>B1IVY4</accession>
<keyword id="KW-0963">Cytoplasm</keyword>
<keyword id="KW-0489">Methyltransferase</keyword>
<keyword id="KW-0694">RNA-binding</keyword>
<keyword id="KW-0698">rRNA processing</keyword>
<keyword id="KW-0949">S-adenosyl-L-methionine</keyword>
<keyword id="KW-0808">Transferase</keyword>
<dbReference type="EC" id="2.1.1.173" evidence="1"/>
<dbReference type="EC" id="2.1.1.264" evidence="1"/>
<dbReference type="EMBL" id="CP000946">
    <property type="protein sequence ID" value="ACA78278.1"/>
    <property type="molecule type" value="Genomic_DNA"/>
</dbReference>
<dbReference type="SMR" id="B1IVY4"/>
<dbReference type="KEGG" id="ecl:EcolC_2648"/>
<dbReference type="HOGENOM" id="CLU_014042_2_0_6"/>
<dbReference type="GO" id="GO:0005737">
    <property type="term" value="C:cytoplasm"/>
    <property type="evidence" value="ECO:0007669"/>
    <property type="project" value="UniProtKB-SubCell"/>
</dbReference>
<dbReference type="GO" id="GO:0052915">
    <property type="term" value="F:23S rRNA (guanine(2445)-N(2))-methyltransferase activity"/>
    <property type="evidence" value="ECO:0007669"/>
    <property type="project" value="UniProtKB-UniRule"/>
</dbReference>
<dbReference type="GO" id="GO:0003723">
    <property type="term" value="F:RNA binding"/>
    <property type="evidence" value="ECO:0007669"/>
    <property type="project" value="UniProtKB-KW"/>
</dbReference>
<dbReference type="GO" id="GO:0070043">
    <property type="term" value="F:rRNA (guanine-N7-)-methyltransferase activity"/>
    <property type="evidence" value="ECO:0007669"/>
    <property type="project" value="UniProtKB-UniRule"/>
</dbReference>
<dbReference type="CDD" id="cd02440">
    <property type="entry name" value="AdoMet_MTases"/>
    <property type="match status" value="1"/>
</dbReference>
<dbReference type="CDD" id="cd11715">
    <property type="entry name" value="THUMP_AdoMetMT"/>
    <property type="match status" value="1"/>
</dbReference>
<dbReference type="FunFam" id="3.30.750.80:FF:000001">
    <property type="entry name" value="Ribosomal RNA large subunit methyltransferase K/L"/>
    <property type="match status" value="1"/>
</dbReference>
<dbReference type="FunFam" id="3.40.50.150:FF:000039">
    <property type="entry name" value="Ribosomal RNA large subunit methyltransferase K/L"/>
    <property type="match status" value="1"/>
</dbReference>
<dbReference type="Gene3D" id="3.30.2130.30">
    <property type="match status" value="1"/>
</dbReference>
<dbReference type="Gene3D" id="3.30.750.80">
    <property type="entry name" value="RNA methyltransferase domain (HRMD) like"/>
    <property type="match status" value="1"/>
</dbReference>
<dbReference type="Gene3D" id="3.40.50.150">
    <property type="entry name" value="Vaccinia Virus protein VP39"/>
    <property type="match status" value="2"/>
</dbReference>
<dbReference type="HAMAP" id="MF_01858">
    <property type="entry name" value="23SrRNA_methyltr_KL"/>
    <property type="match status" value="1"/>
</dbReference>
<dbReference type="InterPro" id="IPR017244">
    <property type="entry name" value="23SrRNA_methyltr_KL"/>
</dbReference>
<dbReference type="InterPro" id="IPR002052">
    <property type="entry name" value="DNA_methylase_N6_adenine_CS"/>
</dbReference>
<dbReference type="InterPro" id="IPR000241">
    <property type="entry name" value="RlmKL-like_Mtase"/>
</dbReference>
<dbReference type="InterPro" id="IPR053943">
    <property type="entry name" value="RlmKL-like_Mtase_CS"/>
</dbReference>
<dbReference type="InterPro" id="IPR054170">
    <property type="entry name" value="RlmL_1st"/>
</dbReference>
<dbReference type="InterPro" id="IPR019614">
    <property type="entry name" value="SAM-dep_methyl-trfase"/>
</dbReference>
<dbReference type="InterPro" id="IPR029063">
    <property type="entry name" value="SAM-dependent_MTases_sf"/>
</dbReference>
<dbReference type="InterPro" id="IPR004114">
    <property type="entry name" value="THUMP_dom"/>
</dbReference>
<dbReference type="NCBIfam" id="NF008748">
    <property type="entry name" value="PRK11783.1"/>
    <property type="match status" value="1"/>
</dbReference>
<dbReference type="PANTHER" id="PTHR47313">
    <property type="entry name" value="RIBOSOMAL RNA LARGE SUBUNIT METHYLTRANSFERASE K/L"/>
    <property type="match status" value="1"/>
</dbReference>
<dbReference type="PANTHER" id="PTHR47313:SF1">
    <property type="entry name" value="RIBOSOMAL RNA LARGE SUBUNIT METHYLTRANSFERASE K_L"/>
    <property type="match status" value="1"/>
</dbReference>
<dbReference type="Pfam" id="PF10672">
    <property type="entry name" value="Methyltrans_SAM"/>
    <property type="match status" value="1"/>
</dbReference>
<dbReference type="Pfam" id="PF22020">
    <property type="entry name" value="RlmL_1st"/>
    <property type="match status" value="1"/>
</dbReference>
<dbReference type="Pfam" id="PF02926">
    <property type="entry name" value="THUMP"/>
    <property type="match status" value="1"/>
</dbReference>
<dbReference type="Pfam" id="PF01170">
    <property type="entry name" value="UPF0020"/>
    <property type="match status" value="1"/>
</dbReference>
<dbReference type="PIRSF" id="PIRSF037618">
    <property type="entry name" value="RNA_Mtase_bacteria_prd"/>
    <property type="match status" value="1"/>
</dbReference>
<dbReference type="PRINTS" id="PR00507">
    <property type="entry name" value="N12N6MTFRASE"/>
</dbReference>
<dbReference type="SMART" id="SM00981">
    <property type="entry name" value="THUMP"/>
    <property type="match status" value="1"/>
</dbReference>
<dbReference type="SUPFAM" id="SSF53335">
    <property type="entry name" value="S-adenosyl-L-methionine-dependent methyltransferases"/>
    <property type="match status" value="2"/>
</dbReference>
<dbReference type="PROSITE" id="PS51165">
    <property type="entry name" value="THUMP"/>
    <property type="match status" value="1"/>
</dbReference>
<dbReference type="PROSITE" id="PS01261">
    <property type="entry name" value="UPF0020"/>
    <property type="match status" value="1"/>
</dbReference>
<proteinExistence type="inferred from homology"/>
<organism>
    <name type="scientific">Escherichia coli (strain ATCC 8739 / DSM 1576 / NBRC 3972 / NCIMB 8545 / WDCM 00012 / Crooks)</name>
    <dbReference type="NCBI Taxonomy" id="481805"/>
    <lineage>
        <taxon>Bacteria</taxon>
        <taxon>Pseudomonadati</taxon>
        <taxon>Pseudomonadota</taxon>
        <taxon>Gammaproteobacteria</taxon>
        <taxon>Enterobacterales</taxon>
        <taxon>Enterobacteriaceae</taxon>
        <taxon>Escherichia</taxon>
    </lineage>
</organism>
<protein>
    <recommendedName>
        <fullName evidence="1">Ribosomal RNA large subunit methyltransferase K/L</fullName>
    </recommendedName>
    <domain>
        <recommendedName>
            <fullName evidence="1">23S rRNA m2G2445 methyltransferase</fullName>
            <ecNumber evidence="1">2.1.1.173</ecNumber>
        </recommendedName>
        <alternativeName>
            <fullName evidence="1">rRNA (guanine-N(2)-)-methyltransferase RlmL</fullName>
        </alternativeName>
    </domain>
    <domain>
        <recommendedName>
            <fullName evidence="1">23S rRNA m7G2069 methyltransferase</fullName>
            <ecNumber evidence="1">2.1.1.264</ecNumber>
        </recommendedName>
        <alternativeName>
            <fullName evidence="1">rRNA (guanine-N(7)-)-methyltransferase RlmK</fullName>
        </alternativeName>
    </domain>
</protein>
<gene>
    <name evidence="1" type="primary">rlmL</name>
    <name type="ordered locus">EcolC_2648</name>
</gene>
<evidence type="ECO:0000255" key="1">
    <source>
        <dbReference type="HAMAP-Rule" id="MF_01858"/>
    </source>
</evidence>
<comment type="function">
    <text evidence="1">Specifically methylates the guanine in position 2445 (m2G2445) and the guanine in position 2069 (m7G2069) of 23S rRNA.</text>
</comment>
<comment type="catalytic activity">
    <reaction evidence="1">
        <text>guanosine(2445) in 23S rRNA + S-adenosyl-L-methionine = N(2)-methylguanosine(2445) in 23S rRNA + S-adenosyl-L-homocysteine + H(+)</text>
        <dbReference type="Rhea" id="RHEA:42740"/>
        <dbReference type="Rhea" id="RHEA-COMP:10215"/>
        <dbReference type="Rhea" id="RHEA-COMP:10216"/>
        <dbReference type="ChEBI" id="CHEBI:15378"/>
        <dbReference type="ChEBI" id="CHEBI:57856"/>
        <dbReference type="ChEBI" id="CHEBI:59789"/>
        <dbReference type="ChEBI" id="CHEBI:74269"/>
        <dbReference type="ChEBI" id="CHEBI:74481"/>
        <dbReference type="EC" id="2.1.1.173"/>
    </reaction>
</comment>
<comment type="catalytic activity">
    <reaction evidence="1">
        <text>guanosine(2069) in 23S rRNA + S-adenosyl-L-methionine = N(2)-methylguanosine(2069) in 23S rRNA + S-adenosyl-L-homocysteine + H(+)</text>
        <dbReference type="Rhea" id="RHEA:43772"/>
        <dbReference type="Rhea" id="RHEA-COMP:10688"/>
        <dbReference type="Rhea" id="RHEA-COMP:10689"/>
        <dbReference type="ChEBI" id="CHEBI:15378"/>
        <dbReference type="ChEBI" id="CHEBI:57856"/>
        <dbReference type="ChEBI" id="CHEBI:59789"/>
        <dbReference type="ChEBI" id="CHEBI:74269"/>
        <dbReference type="ChEBI" id="CHEBI:74481"/>
        <dbReference type="EC" id="2.1.1.264"/>
    </reaction>
</comment>
<comment type="subcellular location">
    <subcellularLocation>
        <location evidence="1">Cytoplasm</location>
    </subcellularLocation>
</comment>
<comment type="similarity">
    <text evidence="1">Belongs to the methyltransferase superfamily. RlmKL family.</text>
</comment>
<name>RLMKL_ECOLC</name>
<sequence>MNSLFASTARGLEELLKTELENLGAVECQVVQGGVHFKGDTRLVYQSLMWSRLASRIMLPLGECKVYSDLDLYLGVQAINWTEMFNPGATFAVHFSGLNDTIRNSQYGAMKVKDAIVDAFTRKNLPRPNVDRDAPDIRVNVWLHKETASIALDLSGDGLHLRGYRDRAGIAPIKETLAAAIVMRSGWQPGTPLLDPMCGSGTLLIEAAMLATDRAPGLHRGRWGFSGWAQHDEAIWQEVKAEAQTRARKGLAEYSSHFYGSDSDARVIQRARTNARLAGIGELITFEVKDVAQLTNPLPKGPYGTVLSNPPYGERLDSEPALIALHSLLGRIMKNQFGGWNLSLFSASPDLLSCLQLRADKQYKAKNGPLDCVQKNYHVAESTPDSKPAMVAEDYTNRLRKNLKKFEKWARQEGIECYRLYDADLPEYNVAVDRYADWVVVQEYAPPKTIDAHKARQRLFDIIAATISVLGIAPNKLVLKTRERQKGKNQYQKLGEKGEFLEVTEYNAHLWVNLTDYLDTGLFLDHRIARRMLGQMSKGKDFLNLFSYTGSATVHAGLGGARSTTTVDMSRTYLEWAERNLRLNGLTGRAHRLIQADCLAWLREANEQFDLIFIDPPTFSNSKRMEDAFDVQRDHLALMKDLKRLLRAGGTIMFSNNKRGFRMDLDGLAKLGLKAQEITQKTLSQDFARNRQIHNCWLITAA</sequence>
<reference key="1">
    <citation type="submission" date="2008-02" db="EMBL/GenBank/DDBJ databases">
        <title>Complete sequence of Escherichia coli C str. ATCC 8739.</title>
        <authorList>
            <person name="Copeland A."/>
            <person name="Lucas S."/>
            <person name="Lapidus A."/>
            <person name="Glavina del Rio T."/>
            <person name="Dalin E."/>
            <person name="Tice H."/>
            <person name="Bruce D."/>
            <person name="Goodwin L."/>
            <person name="Pitluck S."/>
            <person name="Kiss H."/>
            <person name="Brettin T."/>
            <person name="Detter J.C."/>
            <person name="Han C."/>
            <person name="Kuske C.R."/>
            <person name="Schmutz J."/>
            <person name="Larimer F."/>
            <person name="Land M."/>
            <person name="Hauser L."/>
            <person name="Kyrpides N."/>
            <person name="Mikhailova N."/>
            <person name="Ingram L."/>
            <person name="Richardson P."/>
        </authorList>
    </citation>
    <scope>NUCLEOTIDE SEQUENCE [LARGE SCALE GENOMIC DNA]</scope>
    <source>
        <strain>ATCC 8739 / DSM 1576 / NBRC 3972 / NCIMB 8545 / WDCM 00012 / Crooks</strain>
    </source>
</reference>
<feature type="chain" id="PRO_0000366739" description="Ribosomal RNA large subunit methyltransferase K/L">
    <location>
        <begin position="1"/>
        <end position="702"/>
    </location>
</feature>
<feature type="domain" description="THUMP" evidence="1">
    <location>
        <begin position="43"/>
        <end position="154"/>
    </location>
</feature>